<reference key="1">
    <citation type="submission" date="2008-04" db="EMBL/GenBank/DDBJ databases">
        <title>Complete sequence of chromosome of Methylobacterium populi BJ001.</title>
        <authorList>
            <consortium name="US DOE Joint Genome Institute"/>
            <person name="Copeland A."/>
            <person name="Lucas S."/>
            <person name="Lapidus A."/>
            <person name="Glavina del Rio T."/>
            <person name="Dalin E."/>
            <person name="Tice H."/>
            <person name="Bruce D."/>
            <person name="Goodwin L."/>
            <person name="Pitluck S."/>
            <person name="Chertkov O."/>
            <person name="Brettin T."/>
            <person name="Detter J.C."/>
            <person name="Han C."/>
            <person name="Kuske C.R."/>
            <person name="Schmutz J."/>
            <person name="Larimer F."/>
            <person name="Land M."/>
            <person name="Hauser L."/>
            <person name="Kyrpides N."/>
            <person name="Mikhailova N."/>
            <person name="Marx C."/>
            <person name="Richardson P."/>
        </authorList>
    </citation>
    <scope>NUCLEOTIDE SEQUENCE [LARGE SCALE GENOMIC DNA]</scope>
    <source>
        <strain>ATCC BAA-705 / NCIMB 13946 / BJ001</strain>
    </source>
</reference>
<sequence length="130" mass="14275">MYKAETRGITVTVEPRFVEEESSPGESRYFFAYTVEIVNNGSEQVQLRSRHWRIIDGRGACQEVRGAGVVGKQPVLEPGESFSYTSGCPLTTPDGLMAGSYTMSTVGGESFEAEIPAFSLDSPHLRRVVH</sequence>
<gene>
    <name evidence="1" type="primary">apaG</name>
    <name type="ordered locus">Mpop_0438</name>
</gene>
<dbReference type="EMBL" id="CP001029">
    <property type="protein sequence ID" value="ACB78616.1"/>
    <property type="molecule type" value="Genomic_DNA"/>
</dbReference>
<dbReference type="RefSeq" id="WP_012452375.1">
    <property type="nucleotide sequence ID" value="NC_010725.1"/>
</dbReference>
<dbReference type="SMR" id="B1ZJ42"/>
<dbReference type="STRING" id="441620.Mpop_0438"/>
<dbReference type="KEGG" id="mpo:Mpop_0438"/>
<dbReference type="eggNOG" id="COG2967">
    <property type="taxonomic scope" value="Bacteria"/>
</dbReference>
<dbReference type="HOGENOM" id="CLU_128074_1_0_5"/>
<dbReference type="OrthoDB" id="9795226at2"/>
<dbReference type="Proteomes" id="UP000007136">
    <property type="component" value="Chromosome"/>
</dbReference>
<dbReference type="GO" id="GO:0070987">
    <property type="term" value="P:error-free translesion synthesis"/>
    <property type="evidence" value="ECO:0007669"/>
    <property type="project" value="TreeGrafter"/>
</dbReference>
<dbReference type="Gene3D" id="2.60.40.1470">
    <property type="entry name" value="ApaG domain"/>
    <property type="match status" value="1"/>
</dbReference>
<dbReference type="HAMAP" id="MF_00791">
    <property type="entry name" value="ApaG"/>
    <property type="match status" value="1"/>
</dbReference>
<dbReference type="InterPro" id="IPR007474">
    <property type="entry name" value="ApaG_domain"/>
</dbReference>
<dbReference type="InterPro" id="IPR036767">
    <property type="entry name" value="ApaG_sf"/>
</dbReference>
<dbReference type="InterPro" id="IPR023065">
    <property type="entry name" value="Uncharacterised_ApaG"/>
</dbReference>
<dbReference type="NCBIfam" id="NF003967">
    <property type="entry name" value="PRK05461.1"/>
    <property type="match status" value="1"/>
</dbReference>
<dbReference type="PANTHER" id="PTHR14289">
    <property type="entry name" value="F-BOX ONLY PROTEIN 3"/>
    <property type="match status" value="1"/>
</dbReference>
<dbReference type="PANTHER" id="PTHR14289:SF16">
    <property type="entry name" value="POLYMERASE DELTA-INTERACTING PROTEIN 2"/>
    <property type="match status" value="1"/>
</dbReference>
<dbReference type="Pfam" id="PF04379">
    <property type="entry name" value="DUF525"/>
    <property type="match status" value="1"/>
</dbReference>
<dbReference type="SUPFAM" id="SSF110069">
    <property type="entry name" value="ApaG-like"/>
    <property type="match status" value="1"/>
</dbReference>
<dbReference type="PROSITE" id="PS51087">
    <property type="entry name" value="APAG"/>
    <property type="match status" value="1"/>
</dbReference>
<feature type="chain" id="PRO_1000133796" description="Protein ApaG">
    <location>
        <begin position="1"/>
        <end position="130"/>
    </location>
</feature>
<feature type="domain" description="ApaG" evidence="1">
    <location>
        <begin position="3"/>
        <end position="127"/>
    </location>
</feature>
<protein>
    <recommendedName>
        <fullName evidence="1">Protein ApaG</fullName>
    </recommendedName>
</protein>
<proteinExistence type="inferred from homology"/>
<evidence type="ECO:0000255" key="1">
    <source>
        <dbReference type="HAMAP-Rule" id="MF_00791"/>
    </source>
</evidence>
<accession>B1ZJ42</accession>
<organism>
    <name type="scientific">Methylorubrum populi (strain ATCC BAA-705 / NCIMB 13946 / BJ001)</name>
    <name type="common">Methylobacterium populi</name>
    <dbReference type="NCBI Taxonomy" id="441620"/>
    <lineage>
        <taxon>Bacteria</taxon>
        <taxon>Pseudomonadati</taxon>
        <taxon>Pseudomonadota</taxon>
        <taxon>Alphaproteobacteria</taxon>
        <taxon>Hyphomicrobiales</taxon>
        <taxon>Methylobacteriaceae</taxon>
        <taxon>Methylorubrum</taxon>
    </lineage>
</organism>
<name>APAG_METPB</name>